<dbReference type="EC" id="2.4.1.227" evidence="1"/>
<dbReference type="EMBL" id="CP000447">
    <property type="protein sequence ID" value="ABI73629.1"/>
    <property type="molecule type" value="Genomic_DNA"/>
</dbReference>
<dbReference type="RefSeq" id="WP_011639214.1">
    <property type="nucleotide sequence ID" value="NC_008345.1"/>
</dbReference>
<dbReference type="SMR" id="Q07WI5"/>
<dbReference type="STRING" id="318167.Sfri_3804"/>
<dbReference type="CAZy" id="GT28">
    <property type="family name" value="Glycosyltransferase Family 28"/>
</dbReference>
<dbReference type="KEGG" id="sfr:Sfri_3804"/>
<dbReference type="eggNOG" id="COG0707">
    <property type="taxonomic scope" value="Bacteria"/>
</dbReference>
<dbReference type="HOGENOM" id="CLU_037404_2_0_6"/>
<dbReference type="OrthoDB" id="9808936at2"/>
<dbReference type="UniPathway" id="UPA00219"/>
<dbReference type="Proteomes" id="UP000000684">
    <property type="component" value="Chromosome"/>
</dbReference>
<dbReference type="GO" id="GO:0005886">
    <property type="term" value="C:plasma membrane"/>
    <property type="evidence" value="ECO:0007669"/>
    <property type="project" value="UniProtKB-SubCell"/>
</dbReference>
<dbReference type="GO" id="GO:0051991">
    <property type="term" value="F:UDP-N-acetyl-D-glucosamine:N-acetylmuramoyl-L-alanyl-D-glutamyl-meso-2,6-diaminopimelyl-D-alanyl-D-alanine-diphosphoundecaprenol 4-beta-N-acetylglucosaminlytransferase activity"/>
    <property type="evidence" value="ECO:0007669"/>
    <property type="project" value="RHEA"/>
</dbReference>
<dbReference type="GO" id="GO:0050511">
    <property type="term" value="F:undecaprenyldiphospho-muramoylpentapeptide beta-N-acetylglucosaminyltransferase activity"/>
    <property type="evidence" value="ECO:0007669"/>
    <property type="project" value="UniProtKB-UniRule"/>
</dbReference>
<dbReference type="GO" id="GO:0005975">
    <property type="term" value="P:carbohydrate metabolic process"/>
    <property type="evidence" value="ECO:0007669"/>
    <property type="project" value="InterPro"/>
</dbReference>
<dbReference type="GO" id="GO:0051301">
    <property type="term" value="P:cell division"/>
    <property type="evidence" value="ECO:0007669"/>
    <property type="project" value="UniProtKB-KW"/>
</dbReference>
<dbReference type="GO" id="GO:0071555">
    <property type="term" value="P:cell wall organization"/>
    <property type="evidence" value="ECO:0007669"/>
    <property type="project" value="UniProtKB-KW"/>
</dbReference>
<dbReference type="GO" id="GO:0030259">
    <property type="term" value="P:lipid glycosylation"/>
    <property type="evidence" value="ECO:0007669"/>
    <property type="project" value="UniProtKB-UniRule"/>
</dbReference>
<dbReference type="GO" id="GO:0009252">
    <property type="term" value="P:peptidoglycan biosynthetic process"/>
    <property type="evidence" value="ECO:0007669"/>
    <property type="project" value="UniProtKB-UniRule"/>
</dbReference>
<dbReference type="GO" id="GO:0008360">
    <property type="term" value="P:regulation of cell shape"/>
    <property type="evidence" value="ECO:0007669"/>
    <property type="project" value="UniProtKB-KW"/>
</dbReference>
<dbReference type="CDD" id="cd03785">
    <property type="entry name" value="GT28_MurG"/>
    <property type="match status" value="1"/>
</dbReference>
<dbReference type="Gene3D" id="3.40.50.2000">
    <property type="entry name" value="Glycogen Phosphorylase B"/>
    <property type="match status" value="2"/>
</dbReference>
<dbReference type="HAMAP" id="MF_00033">
    <property type="entry name" value="MurG"/>
    <property type="match status" value="1"/>
</dbReference>
<dbReference type="InterPro" id="IPR006009">
    <property type="entry name" value="GlcNAc_MurG"/>
</dbReference>
<dbReference type="InterPro" id="IPR007235">
    <property type="entry name" value="Glyco_trans_28_C"/>
</dbReference>
<dbReference type="InterPro" id="IPR004276">
    <property type="entry name" value="GlycoTrans_28_N"/>
</dbReference>
<dbReference type="NCBIfam" id="TIGR01133">
    <property type="entry name" value="murG"/>
    <property type="match status" value="1"/>
</dbReference>
<dbReference type="PANTHER" id="PTHR21015:SF22">
    <property type="entry name" value="GLYCOSYLTRANSFERASE"/>
    <property type="match status" value="1"/>
</dbReference>
<dbReference type="PANTHER" id="PTHR21015">
    <property type="entry name" value="UDP-N-ACETYLGLUCOSAMINE--N-ACETYLMURAMYL-(PENTAPEPTIDE) PYROPHOSPHORYL-UNDECAPRENOL N-ACETYLGLUCOSAMINE TRANSFERASE 1"/>
    <property type="match status" value="1"/>
</dbReference>
<dbReference type="Pfam" id="PF04101">
    <property type="entry name" value="Glyco_tran_28_C"/>
    <property type="match status" value="1"/>
</dbReference>
<dbReference type="Pfam" id="PF03033">
    <property type="entry name" value="Glyco_transf_28"/>
    <property type="match status" value="1"/>
</dbReference>
<dbReference type="SUPFAM" id="SSF53756">
    <property type="entry name" value="UDP-Glycosyltransferase/glycogen phosphorylase"/>
    <property type="match status" value="1"/>
</dbReference>
<accession>Q07WI5</accession>
<feature type="chain" id="PRO_0000315166" description="UDP-N-acetylglucosamine--N-acetylmuramyl-(pentapeptide) pyrophosphoryl-undecaprenol N-acetylglucosamine transferase">
    <location>
        <begin position="1"/>
        <end position="367"/>
    </location>
</feature>
<feature type="binding site" evidence="1">
    <location>
        <begin position="18"/>
        <end position="20"/>
    </location>
    <ligand>
        <name>UDP-N-acetyl-alpha-D-glucosamine</name>
        <dbReference type="ChEBI" id="CHEBI:57705"/>
    </ligand>
</feature>
<feature type="binding site" evidence="1">
    <location>
        <position position="130"/>
    </location>
    <ligand>
        <name>UDP-N-acetyl-alpha-D-glucosamine</name>
        <dbReference type="ChEBI" id="CHEBI:57705"/>
    </ligand>
</feature>
<feature type="binding site" evidence="1">
    <location>
        <position position="170"/>
    </location>
    <ligand>
        <name>UDP-N-acetyl-alpha-D-glucosamine</name>
        <dbReference type="ChEBI" id="CHEBI:57705"/>
    </ligand>
</feature>
<feature type="binding site" evidence="1">
    <location>
        <position position="196"/>
    </location>
    <ligand>
        <name>UDP-N-acetyl-alpha-D-glucosamine</name>
        <dbReference type="ChEBI" id="CHEBI:57705"/>
    </ligand>
</feature>
<feature type="binding site" evidence="1">
    <location>
        <position position="252"/>
    </location>
    <ligand>
        <name>UDP-N-acetyl-alpha-D-glucosamine</name>
        <dbReference type="ChEBI" id="CHEBI:57705"/>
    </ligand>
</feature>
<feature type="binding site" evidence="1">
    <location>
        <begin position="271"/>
        <end position="276"/>
    </location>
    <ligand>
        <name>UDP-N-acetyl-alpha-D-glucosamine</name>
        <dbReference type="ChEBI" id="CHEBI:57705"/>
    </ligand>
</feature>
<feature type="binding site" evidence="1">
    <location>
        <position position="297"/>
    </location>
    <ligand>
        <name>UDP-N-acetyl-alpha-D-glucosamine</name>
        <dbReference type="ChEBI" id="CHEBI:57705"/>
    </ligand>
</feature>
<organism>
    <name type="scientific">Shewanella frigidimarina (strain NCIMB 400)</name>
    <dbReference type="NCBI Taxonomy" id="318167"/>
    <lineage>
        <taxon>Bacteria</taxon>
        <taxon>Pseudomonadati</taxon>
        <taxon>Pseudomonadota</taxon>
        <taxon>Gammaproteobacteria</taxon>
        <taxon>Alteromonadales</taxon>
        <taxon>Shewanellaceae</taxon>
        <taxon>Shewanella</taxon>
    </lineage>
</organism>
<name>MURG_SHEFN</name>
<proteinExistence type="inferred from homology"/>
<sequence>MNSNISSSPKILIMAGGTGGHVFPALAVAKYLAEKGWQIRWLGTADRMEARLVPQHGFDIEFIDIKGVRGNGLMRKLAAPFKIIRSIIQAKAVIDDFQPDVILGMGGFASGPGGVAGKLSGIPVVLHEQNAIPGLTNKLLSKIAKKVLCAFPNTFASNVANVEVVGNPIRQELIELGAQIKTPQADALRVLVVGGSLGAKVLNDVMPAVVAHLSKYHSLTVWHQVGKNNQATVKASYQQLGQSDSVNVAEFIDDMEAAYRWADVVVCRSGALTVSELAAVGLPSILVPYPHAVDDHQTVNASVLVDAGAGFLLPQTILNADNLAEKLQLFAENRQELAQMGHKARGVAVLDATQRVADICASFARKG</sequence>
<evidence type="ECO:0000255" key="1">
    <source>
        <dbReference type="HAMAP-Rule" id="MF_00033"/>
    </source>
</evidence>
<keyword id="KW-0131">Cell cycle</keyword>
<keyword id="KW-0132">Cell division</keyword>
<keyword id="KW-0997">Cell inner membrane</keyword>
<keyword id="KW-1003">Cell membrane</keyword>
<keyword id="KW-0133">Cell shape</keyword>
<keyword id="KW-0961">Cell wall biogenesis/degradation</keyword>
<keyword id="KW-0328">Glycosyltransferase</keyword>
<keyword id="KW-0472">Membrane</keyword>
<keyword id="KW-0573">Peptidoglycan synthesis</keyword>
<keyword id="KW-1185">Reference proteome</keyword>
<keyword id="KW-0808">Transferase</keyword>
<protein>
    <recommendedName>
        <fullName evidence="1">UDP-N-acetylglucosamine--N-acetylmuramyl-(pentapeptide) pyrophosphoryl-undecaprenol N-acetylglucosamine transferase</fullName>
        <ecNumber evidence="1">2.4.1.227</ecNumber>
    </recommendedName>
    <alternativeName>
        <fullName evidence="1">Undecaprenyl-PP-MurNAc-pentapeptide-UDPGlcNAc GlcNAc transferase</fullName>
    </alternativeName>
</protein>
<gene>
    <name evidence="1" type="primary">murG</name>
    <name type="ordered locus">Sfri_3804</name>
</gene>
<reference key="1">
    <citation type="submission" date="2006-08" db="EMBL/GenBank/DDBJ databases">
        <title>Complete sequence of Shewanella frigidimarina NCIMB 400.</title>
        <authorList>
            <consortium name="US DOE Joint Genome Institute"/>
            <person name="Copeland A."/>
            <person name="Lucas S."/>
            <person name="Lapidus A."/>
            <person name="Barry K."/>
            <person name="Detter J.C."/>
            <person name="Glavina del Rio T."/>
            <person name="Hammon N."/>
            <person name="Israni S."/>
            <person name="Dalin E."/>
            <person name="Tice H."/>
            <person name="Pitluck S."/>
            <person name="Fredrickson J.K."/>
            <person name="Kolker E."/>
            <person name="McCuel L.A."/>
            <person name="DiChristina T."/>
            <person name="Nealson K.H."/>
            <person name="Newman D."/>
            <person name="Tiedje J.M."/>
            <person name="Zhou J."/>
            <person name="Romine M.F."/>
            <person name="Culley D.E."/>
            <person name="Serres M."/>
            <person name="Chertkov O."/>
            <person name="Brettin T."/>
            <person name="Bruce D."/>
            <person name="Han C."/>
            <person name="Tapia R."/>
            <person name="Gilna P."/>
            <person name="Schmutz J."/>
            <person name="Larimer F."/>
            <person name="Land M."/>
            <person name="Hauser L."/>
            <person name="Kyrpides N."/>
            <person name="Mikhailova N."/>
            <person name="Richardson P."/>
        </authorList>
    </citation>
    <scope>NUCLEOTIDE SEQUENCE [LARGE SCALE GENOMIC DNA]</scope>
    <source>
        <strain>NCIMB 400</strain>
    </source>
</reference>
<comment type="function">
    <text evidence="1">Cell wall formation. Catalyzes the transfer of a GlcNAc subunit on undecaprenyl-pyrophosphoryl-MurNAc-pentapeptide (lipid intermediate I) to form undecaprenyl-pyrophosphoryl-MurNAc-(pentapeptide)GlcNAc (lipid intermediate II).</text>
</comment>
<comment type="catalytic activity">
    <reaction evidence="1">
        <text>di-trans,octa-cis-undecaprenyl diphospho-N-acetyl-alpha-D-muramoyl-L-alanyl-D-glutamyl-meso-2,6-diaminopimeloyl-D-alanyl-D-alanine + UDP-N-acetyl-alpha-D-glucosamine = di-trans,octa-cis-undecaprenyl diphospho-[N-acetyl-alpha-D-glucosaminyl-(1-&gt;4)]-N-acetyl-alpha-D-muramoyl-L-alanyl-D-glutamyl-meso-2,6-diaminopimeloyl-D-alanyl-D-alanine + UDP + H(+)</text>
        <dbReference type="Rhea" id="RHEA:31227"/>
        <dbReference type="ChEBI" id="CHEBI:15378"/>
        <dbReference type="ChEBI" id="CHEBI:57705"/>
        <dbReference type="ChEBI" id="CHEBI:58223"/>
        <dbReference type="ChEBI" id="CHEBI:61387"/>
        <dbReference type="ChEBI" id="CHEBI:61388"/>
        <dbReference type="EC" id="2.4.1.227"/>
    </reaction>
</comment>
<comment type="pathway">
    <text evidence="1">Cell wall biogenesis; peptidoglycan biosynthesis.</text>
</comment>
<comment type="subcellular location">
    <subcellularLocation>
        <location evidence="1">Cell inner membrane</location>
        <topology evidence="1">Peripheral membrane protein</topology>
        <orientation evidence="1">Cytoplasmic side</orientation>
    </subcellularLocation>
</comment>
<comment type="similarity">
    <text evidence="1">Belongs to the glycosyltransferase 28 family. MurG subfamily.</text>
</comment>